<protein>
    <recommendedName>
        <fullName evidence="1">Ribonuclease 3</fullName>
        <ecNumber evidence="1">3.1.26.3</ecNumber>
    </recommendedName>
    <alternativeName>
        <fullName evidence="1">Ribonuclease III</fullName>
        <shortName evidence="1">RNase III</shortName>
    </alternativeName>
</protein>
<evidence type="ECO:0000255" key="1">
    <source>
        <dbReference type="HAMAP-Rule" id="MF_00104"/>
    </source>
</evidence>
<dbReference type="EC" id="3.1.26.3" evidence="1"/>
<dbReference type="EMBL" id="BX897700">
    <property type="protein sequence ID" value="CAF25927.1"/>
    <property type="molecule type" value="Genomic_DNA"/>
</dbReference>
<dbReference type="RefSeq" id="WP_034449164.1">
    <property type="nucleotide sequence ID" value="NC_005955.1"/>
</dbReference>
<dbReference type="SMR" id="Q6G082"/>
<dbReference type="KEGG" id="bqu:BQ04280"/>
<dbReference type="eggNOG" id="COG0571">
    <property type="taxonomic scope" value="Bacteria"/>
</dbReference>
<dbReference type="HOGENOM" id="CLU_000907_1_1_5"/>
<dbReference type="OrthoDB" id="9805026at2"/>
<dbReference type="Proteomes" id="UP000000597">
    <property type="component" value="Chromosome"/>
</dbReference>
<dbReference type="GO" id="GO:0005737">
    <property type="term" value="C:cytoplasm"/>
    <property type="evidence" value="ECO:0007669"/>
    <property type="project" value="UniProtKB-SubCell"/>
</dbReference>
<dbReference type="GO" id="GO:0003725">
    <property type="term" value="F:double-stranded RNA binding"/>
    <property type="evidence" value="ECO:0007669"/>
    <property type="project" value="TreeGrafter"/>
</dbReference>
<dbReference type="GO" id="GO:0046872">
    <property type="term" value="F:metal ion binding"/>
    <property type="evidence" value="ECO:0007669"/>
    <property type="project" value="UniProtKB-KW"/>
</dbReference>
<dbReference type="GO" id="GO:0004525">
    <property type="term" value="F:ribonuclease III activity"/>
    <property type="evidence" value="ECO:0007669"/>
    <property type="project" value="UniProtKB-UniRule"/>
</dbReference>
<dbReference type="GO" id="GO:0019843">
    <property type="term" value="F:rRNA binding"/>
    <property type="evidence" value="ECO:0007669"/>
    <property type="project" value="UniProtKB-KW"/>
</dbReference>
<dbReference type="GO" id="GO:0006397">
    <property type="term" value="P:mRNA processing"/>
    <property type="evidence" value="ECO:0007669"/>
    <property type="project" value="UniProtKB-UniRule"/>
</dbReference>
<dbReference type="GO" id="GO:0010468">
    <property type="term" value="P:regulation of gene expression"/>
    <property type="evidence" value="ECO:0007669"/>
    <property type="project" value="TreeGrafter"/>
</dbReference>
<dbReference type="GO" id="GO:0006364">
    <property type="term" value="P:rRNA processing"/>
    <property type="evidence" value="ECO:0007669"/>
    <property type="project" value="UniProtKB-UniRule"/>
</dbReference>
<dbReference type="GO" id="GO:0008033">
    <property type="term" value="P:tRNA processing"/>
    <property type="evidence" value="ECO:0007669"/>
    <property type="project" value="UniProtKB-KW"/>
</dbReference>
<dbReference type="CDD" id="cd10845">
    <property type="entry name" value="DSRM_RNAse_III_family"/>
    <property type="match status" value="1"/>
</dbReference>
<dbReference type="CDD" id="cd00593">
    <property type="entry name" value="RIBOc"/>
    <property type="match status" value="1"/>
</dbReference>
<dbReference type="Gene3D" id="3.30.160.20">
    <property type="match status" value="1"/>
</dbReference>
<dbReference type="Gene3D" id="1.10.1520.10">
    <property type="entry name" value="Ribonuclease III domain"/>
    <property type="match status" value="1"/>
</dbReference>
<dbReference type="HAMAP" id="MF_00104">
    <property type="entry name" value="RNase_III"/>
    <property type="match status" value="1"/>
</dbReference>
<dbReference type="InterPro" id="IPR014720">
    <property type="entry name" value="dsRBD_dom"/>
</dbReference>
<dbReference type="InterPro" id="IPR011907">
    <property type="entry name" value="RNase_III"/>
</dbReference>
<dbReference type="InterPro" id="IPR000999">
    <property type="entry name" value="RNase_III_dom"/>
</dbReference>
<dbReference type="InterPro" id="IPR036389">
    <property type="entry name" value="RNase_III_sf"/>
</dbReference>
<dbReference type="NCBIfam" id="TIGR02191">
    <property type="entry name" value="RNaseIII"/>
    <property type="match status" value="1"/>
</dbReference>
<dbReference type="PANTHER" id="PTHR11207:SF0">
    <property type="entry name" value="RIBONUCLEASE 3"/>
    <property type="match status" value="1"/>
</dbReference>
<dbReference type="PANTHER" id="PTHR11207">
    <property type="entry name" value="RIBONUCLEASE III"/>
    <property type="match status" value="1"/>
</dbReference>
<dbReference type="Pfam" id="PF00035">
    <property type="entry name" value="dsrm"/>
    <property type="match status" value="1"/>
</dbReference>
<dbReference type="Pfam" id="PF14622">
    <property type="entry name" value="Ribonucleas_3_3"/>
    <property type="match status" value="1"/>
</dbReference>
<dbReference type="SMART" id="SM00358">
    <property type="entry name" value="DSRM"/>
    <property type="match status" value="1"/>
</dbReference>
<dbReference type="SMART" id="SM00535">
    <property type="entry name" value="RIBOc"/>
    <property type="match status" value="1"/>
</dbReference>
<dbReference type="SUPFAM" id="SSF54768">
    <property type="entry name" value="dsRNA-binding domain-like"/>
    <property type="match status" value="1"/>
</dbReference>
<dbReference type="SUPFAM" id="SSF69065">
    <property type="entry name" value="RNase III domain-like"/>
    <property type="match status" value="1"/>
</dbReference>
<dbReference type="PROSITE" id="PS50137">
    <property type="entry name" value="DS_RBD"/>
    <property type="match status" value="1"/>
</dbReference>
<dbReference type="PROSITE" id="PS00517">
    <property type="entry name" value="RNASE_3_1"/>
    <property type="match status" value="1"/>
</dbReference>
<dbReference type="PROSITE" id="PS50142">
    <property type="entry name" value="RNASE_3_2"/>
    <property type="match status" value="1"/>
</dbReference>
<proteinExistence type="inferred from homology"/>
<name>RNC_BARQU</name>
<comment type="function">
    <text evidence="1">Digests double-stranded RNA. Involved in the processing of primary rRNA transcript to yield the immediate precursors to the large and small rRNAs (23S and 16S). Processes some mRNAs, and tRNAs when they are encoded in the rRNA operon. Processes pre-crRNA and tracrRNA of type II CRISPR loci if present in the organism.</text>
</comment>
<comment type="catalytic activity">
    <reaction evidence="1">
        <text>Endonucleolytic cleavage to 5'-phosphomonoester.</text>
        <dbReference type="EC" id="3.1.26.3"/>
    </reaction>
</comment>
<comment type="cofactor">
    <cofactor evidence="1">
        <name>Mg(2+)</name>
        <dbReference type="ChEBI" id="CHEBI:18420"/>
    </cofactor>
</comment>
<comment type="subunit">
    <text evidence="1">Homodimer.</text>
</comment>
<comment type="subcellular location">
    <subcellularLocation>
        <location evidence="1">Cytoplasm</location>
    </subcellularLocation>
</comment>
<comment type="similarity">
    <text evidence="1">Belongs to the ribonuclease III family.</text>
</comment>
<feature type="chain" id="PRO_0000228500" description="Ribonuclease 3">
    <location>
        <begin position="1"/>
        <end position="235"/>
    </location>
</feature>
<feature type="domain" description="RNase III" evidence="1">
    <location>
        <begin position="6"/>
        <end position="131"/>
    </location>
</feature>
<feature type="domain" description="DRBM" evidence="1">
    <location>
        <begin position="156"/>
        <end position="225"/>
    </location>
</feature>
<feature type="active site" evidence="1">
    <location>
        <position position="48"/>
    </location>
</feature>
<feature type="active site" evidence="1">
    <location>
        <position position="120"/>
    </location>
</feature>
<feature type="binding site" evidence="1">
    <location>
        <position position="44"/>
    </location>
    <ligand>
        <name>Mg(2+)</name>
        <dbReference type="ChEBI" id="CHEBI:18420"/>
    </ligand>
</feature>
<feature type="binding site" evidence="1">
    <location>
        <position position="117"/>
    </location>
    <ligand>
        <name>Mg(2+)</name>
        <dbReference type="ChEBI" id="CHEBI:18420"/>
    </ligand>
</feature>
<feature type="binding site" evidence="1">
    <location>
        <position position="120"/>
    </location>
    <ligand>
        <name>Mg(2+)</name>
        <dbReference type="ChEBI" id="CHEBI:18420"/>
    </ligand>
</feature>
<reference key="1">
    <citation type="journal article" date="2004" name="Proc. Natl. Acad. Sci. U.S.A.">
        <title>The louse-borne human pathogen Bartonella quintana is a genomic derivative of the zoonotic agent Bartonella henselae.</title>
        <authorList>
            <person name="Alsmark U.C.M."/>
            <person name="Frank A.C."/>
            <person name="Karlberg E.O."/>
            <person name="Legault B.-A."/>
            <person name="Ardell D.H."/>
            <person name="Canbaeck B."/>
            <person name="Eriksson A.-S."/>
            <person name="Naeslund A.K."/>
            <person name="Handley S.A."/>
            <person name="Huvet M."/>
            <person name="La Scola B."/>
            <person name="Holmberg M."/>
            <person name="Andersson S.G.E."/>
        </authorList>
    </citation>
    <scope>NUCLEOTIDE SEQUENCE [LARGE SCALE GENOMIC DNA]</scope>
    <source>
        <strain>Toulouse</strain>
    </source>
</reference>
<organism>
    <name type="scientific">Bartonella quintana (strain Toulouse)</name>
    <name type="common">Rochalimaea quintana</name>
    <dbReference type="NCBI Taxonomy" id="283165"/>
    <lineage>
        <taxon>Bacteria</taxon>
        <taxon>Pseudomonadati</taxon>
        <taxon>Pseudomonadota</taxon>
        <taxon>Alphaproteobacteria</taxon>
        <taxon>Hyphomicrobiales</taxon>
        <taxon>Bartonellaceae</taxon>
        <taxon>Bartonella</taxon>
    </lineage>
</organism>
<sequence>MNCPIIDQLERLTEHHFKDEERLKKALTHSSVQDSEQGNYERLEFLGDRVLGLLIAEMLYKLFPQASEGELSVRLNGLVNAQTCADIALEMGLPDMIHVGFEMRNLKGRRLTNMHADVIEALIAVMYLDGGLKSVRPFIRRYWQSRAKQMDAGRRDAKTELQEWAHVQGGVQPHYRVVKRSGPDHDPVFMVEVSILGFAPEIGQGNSKRCAERMAAEKVLRREGIWKTMGKNDHE</sequence>
<accession>Q6G082</accession>
<gene>
    <name evidence="1" type="primary">rnc</name>
    <name type="ordered locus">BQ04280</name>
</gene>
<keyword id="KW-0963">Cytoplasm</keyword>
<keyword id="KW-0255">Endonuclease</keyword>
<keyword id="KW-0378">Hydrolase</keyword>
<keyword id="KW-0460">Magnesium</keyword>
<keyword id="KW-0479">Metal-binding</keyword>
<keyword id="KW-0507">mRNA processing</keyword>
<keyword id="KW-0540">Nuclease</keyword>
<keyword id="KW-0694">RNA-binding</keyword>
<keyword id="KW-0698">rRNA processing</keyword>
<keyword id="KW-0699">rRNA-binding</keyword>
<keyword id="KW-0819">tRNA processing</keyword>